<dbReference type="EMBL" id="CP000247">
    <property type="protein sequence ID" value="ABG69072.1"/>
    <property type="molecule type" value="Genomic_DNA"/>
</dbReference>
<dbReference type="RefSeq" id="WP_000877137.1">
    <property type="nucleotide sequence ID" value="NC_008253.1"/>
</dbReference>
<dbReference type="SMR" id="Q0TJ07"/>
<dbReference type="KEGG" id="ecp:ECP_1059"/>
<dbReference type="HOGENOM" id="CLU_057831_2_0_6"/>
<dbReference type="Proteomes" id="UP000009182">
    <property type="component" value="Chromosome"/>
</dbReference>
<dbReference type="FunFam" id="1.10.10.10:FF:000196">
    <property type="entry name" value="UPF0502 protein YceH"/>
    <property type="match status" value="1"/>
</dbReference>
<dbReference type="Gene3D" id="1.10.10.10">
    <property type="entry name" value="Winged helix-like DNA-binding domain superfamily/Winged helix DNA-binding domain"/>
    <property type="match status" value="2"/>
</dbReference>
<dbReference type="HAMAP" id="MF_01584">
    <property type="entry name" value="UPF0502"/>
    <property type="match status" value="1"/>
</dbReference>
<dbReference type="InterPro" id="IPR007432">
    <property type="entry name" value="DUF480"/>
</dbReference>
<dbReference type="InterPro" id="IPR036388">
    <property type="entry name" value="WH-like_DNA-bd_sf"/>
</dbReference>
<dbReference type="InterPro" id="IPR036390">
    <property type="entry name" value="WH_DNA-bd_sf"/>
</dbReference>
<dbReference type="NCBIfam" id="NF008413">
    <property type="entry name" value="PRK11239.1"/>
    <property type="match status" value="1"/>
</dbReference>
<dbReference type="PANTHER" id="PTHR38768">
    <property type="entry name" value="UPF0502 PROTEIN YCEH"/>
    <property type="match status" value="1"/>
</dbReference>
<dbReference type="PANTHER" id="PTHR38768:SF1">
    <property type="entry name" value="UPF0502 PROTEIN YCEH"/>
    <property type="match status" value="1"/>
</dbReference>
<dbReference type="Pfam" id="PF04337">
    <property type="entry name" value="DUF480"/>
    <property type="match status" value="1"/>
</dbReference>
<dbReference type="SUPFAM" id="SSF46785">
    <property type="entry name" value="Winged helix' DNA-binding domain"/>
    <property type="match status" value="2"/>
</dbReference>
<sequence>MKYQLTAMEARVIGCLLEKQVTTPEQYPLSVNGVVTACNQKTNREPVMNLSESEVQEQLDNLVKRHYLRTVSGFGNRVTKYEQRFCNSEFGDLKLSAAEVALITTLLLRGAQTPGELRSRAARMYEFSDMAEVESTLEQLASREDGPFVVRLAREPGKRESRYMHLFSGEVENPPAVTDMSNAADGDLQARVEALEIEVAELKQRLDSLLAHLGD</sequence>
<comment type="similarity">
    <text evidence="1">Belongs to the UPF0502 family.</text>
</comment>
<reference key="1">
    <citation type="journal article" date="2006" name="Mol. Microbiol.">
        <title>Role of pathogenicity island-associated integrases in the genome plasticity of uropathogenic Escherichia coli strain 536.</title>
        <authorList>
            <person name="Hochhut B."/>
            <person name="Wilde C."/>
            <person name="Balling G."/>
            <person name="Middendorf B."/>
            <person name="Dobrindt U."/>
            <person name="Brzuszkiewicz E."/>
            <person name="Gottschalk G."/>
            <person name="Carniel E."/>
            <person name="Hacker J."/>
        </authorList>
    </citation>
    <scope>NUCLEOTIDE SEQUENCE [LARGE SCALE GENOMIC DNA]</scope>
    <source>
        <strain>536 / UPEC</strain>
    </source>
</reference>
<feature type="chain" id="PRO_0000309389" description="UPF0502 protein YceH">
    <location>
        <begin position="1"/>
        <end position="215"/>
    </location>
</feature>
<feature type="modified residue" description="N6-acetyllysine" evidence="1">
    <location>
        <position position="80"/>
    </location>
</feature>
<organism>
    <name type="scientific">Escherichia coli O6:K15:H31 (strain 536 / UPEC)</name>
    <dbReference type="NCBI Taxonomy" id="362663"/>
    <lineage>
        <taxon>Bacteria</taxon>
        <taxon>Pseudomonadati</taxon>
        <taxon>Pseudomonadota</taxon>
        <taxon>Gammaproteobacteria</taxon>
        <taxon>Enterobacterales</taxon>
        <taxon>Enterobacteriaceae</taxon>
        <taxon>Escherichia</taxon>
    </lineage>
</organism>
<name>YCEH_ECOL5</name>
<accession>Q0TJ07</accession>
<protein>
    <recommendedName>
        <fullName evidence="1">UPF0502 protein YceH</fullName>
    </recommendedName>
</protein>
<keyword id="KW-0007">Acetylation</keyword>
<gene>
    <name evidence="1" type="primary">yceH</name>
    <name type="ordered locus">ECP_1059</name>
</gene>
<evidence type="ECO:0000255" key="1">
    <source>
        <dbReference type="HAMAP-Rule" id="MF_01584"/>
    </source>
</evidence>
<proteinExistence type="inferred from homology"/>